<protein>
    <recommendedName>
        <fullName>Fructose-bisphosphate aldolase C</fullName>
        <ecNumber>4.1.2.13</ecNumber>
    </recommendedName>
    <alternativeName>
        <fullName>Brain-type aldolase</fullName>
    </alternativeName>
</protein>
<evidence type="ECO:0000250" key="1"/>
<evidence type="ECO:0000250" key="2">
    <source>
        <dbReference type="UniProtKB" id="P05065"/>
    </source>
</evidence>
<evidence type="ECO:0000250" key="3">
    <source>
        <dbReference type="UniProtKB" id="P09972"/>
    </source>
</evidence>
<evidence type="ECO:0000305" key="4"/>
<feature type="chain" id="PRO_0000216948" description="Fructose-bisphosphate aldolase C">
    <location>
        <begin position="1"/>
        <end position="364"/>
    </location>
</feature>
<feature type="active site" description="Proton acceptor" evidence="1">
    <location>
        <position position="188"/>
    </location>
</feature>
<feature type="active site" description="Schiff-base intermediate with dihydroxyacetone-P">
    <location>
        <position position="230"/>
    </location>
</feature>
<feature type="binding site">
    <location>
        <position position="56"/>
    </location>
    <ligand>
        <name>substrate</name>
    </ligand>
</feature>
<feature type="binding site">
    <location>
        <position position="147"/>
    </location>
    <ligand>
        <name>substrate</name>
    </ligand>
</feature>
<feature type="site" description="Necessary for preference for fructose 1,6-bisphosphate over fructose 1-phosphate">
    <location>
        <position position="364"/>
    </location>
</feature>
<feature type="modified residue" description="Phosphotyrosine" evidence="2">
    <location>
        <position position="5"/>
    </location>
</feature>
<feature type="modified residue" description="Phosphoserine" evidence="3">
    <location>
        <position position="36"/>
    </location>
</feature>
<feature type="modified residue" description="Phosphoserine" evidence="3">
    <location>
        <position position="39"/>
    </location>
</feature>
<feature type="modified residue" description="Phosphoserine" evidence="3">
    <location>
        <position position="45"/>
    </location>
</feature>
<feature type="modified residue" description="N6-acetyllysine" evidence="3">
    <location>
        <position position="111"/>
    </location>
</feature>
<feature type="modified residue" description="Phosphoserine" evidence="2">
    <location>
        <position position="132"/>
    </location>
</feature>
<dbReference type="EC" id="4.1.2.13"/>
<dbReference type="EMBL" id="AB051116">
    <property type="protein sequence ID" value="BAB18142.1"/>
    <property type="molecule type" value="mRNA"/>
</dbReference>
<dbReference type="EMBL" id="AB169815">
    <property type="protein sequence ID" value="BAE01896.1"/>
    <property type="molecule type" value="mRNA"/>
</dbReference>
<dbReference type="RefSeq" id="XP_005583296.2">
    <property type="nucleotide sequence ID" value="XM_005583239.4"/>
</dbReference>
<dbReference type="RefSeq" id="XP_005583297.1">
    <property type="nucleotide sequence ID" value="XM_005583240.4"/>
</dbReference>
<dbReference type="RefSeq" id="XP_005583298.1">
    <property type="nucleotide sequence ID" value="XM_005583241.4"/>
</dbReference>
<dbReference type="RefSeq" id="XP_005583300.1">
    <property type="nucleotide sequence ID" value="XM_005583243.4"/>
</dbReference>
<dbReference type="RefSeq" id="XP_015293536.1">
    <property type="nucleotide sequence ID" value="XM_015438050.3"/>
</dbReference>
<dbReference type="SMR" id="Q9GKW3"/>
<dbReference type="STRING" id="9541.ENSMFAP00000016361"/>
<dbReference type="GeneID" id="101865220"/>
<dbReference type="KEGG" id="mcf:101865220"/>
<dbReference type="CTD" id="230"/>
<dbReference type="VEuPathDB" id="HostDB:ENSMFAG00000031336"/>
<dbReference type="eggNOG" id="KOG1557">
    <property type="taxonomic scope" value="Eukaryota"/>
</dbReference>
<dbReference type="OMA" id="GDAMQKW"/>
<dbReference type="UniPathway" id="UPA00109">
    <property type="reaction ID" value="UER00183"/>
</dbReference>
<dbReference type="Proteomes" id="UP000233100">
    <property type="component" value="Chromosome 16"/>
</dbReference>
<dbReference type="GO" id="GO:0004332">
    <property type="term" value="F:fructose-bisphosphate aldolase activity"/>
    <property type="evidence" value="ECO:0000250"/>
    <property type="project" value="UniProtKB"/>
</dbReference>
<dbReference type="GO" id="GO:0030388">
    <property type="term" value="P:fructose 1,6-bisphosphate metabolic process"/>
    <property type="evidence" value="ECO:0000250"/>
    <property type="project" value="UniProtKB"/>
</dbReference>
<dbReference type="GO" id="GO:0006096">
    <property type="term" value="P:glycolytic process"/>
    <property type="evidence" value="ECO:0007669"/>
    <property type="project" value="UniProtKB-UniPathway"/>
</dbReference>
<dbReference type="CDD" id="cd00948">
    <property type="entry name" value="FBP_aldolase_I_a"/>
    <property type="match status" value="1"/>
</dbReference>
<dbReference type="FunFam" id="3.20.20.70:FF:000205">
    <property type="entry name" value="Fructose-bisphosphate aldolase"/>
    <property type="match status" value="1"/>
</dbReference>
<dbReference type="FunFam" id="3.20.20.70:FF:000208">
    <property type="entry name" value="Fructose-bisphosphate aldolase"/>
    <property type="match status" value="1"/>
</dbReference>
<dbReference type="Gene3D" id="3.20.20.70">
    <property type="entry name" value="Aldolase class I"/>
    <property type="match status" value="1"/>
</dbReference>
<dbReference type="InterPro" id="IPR029768">
    <property type="entry name" value="Aldolase_I_AS"/>
</dbReference>
<dbReference type="InterPro" id="IPR013785">
    <property type="entry name" value="Aldolase_TIM"/>
</dbReference>
<dbReference type="InterPro" id="IPR000741">
    <property type="entry name" value="FBA_I"/>
</dbReference>
<dbReference type="NCBIfam" id="NF033379">
    <property type="entry name" value="FrucBisAld_I"/>
    <property type="match status" value="1"/>
</dbReference>
<dbReference type="PANTHER" id="PTHR11627">
    <property type="entry name" value="FRUCTOSE-BISPHOSPHATE ALDOLASE"/>
    <property type="match status" value="1"/>
</dbReference>
<dbReference type="Pfam" id="PF00274">
    <property type="entry name" value="Glycolytic"/>
    <property type="match status" value="1"/>
</dbReference>
<dbReference type="SUPFAM" id="SSF51569">
    <property type="entry name" value="Aldolase"/>
    <property type="match status" value="1"/>
</dbReference>
<dbReference type="PROSITE" id="PS00158">
    <property type="entry name" value="ALDOLASE_CLASS_I"/>
    <property type="match status" value="1"/>
</dbReference>
<organism>
    <name type="scientific">Macaca fascicularis</name>
    <name type="common">Crab-eating macaque</name>
    <name type="synonym">Cynomolgus monkey</name>
    <dbReference type="NCBI Taxonomy" id="9541"/>
    <lineage>
        <taxon>Eukaryota</taxon>
        <taxon>Metazoa</taxon>
        <taxon>Chordata</taxon>
        <taxon>Craniata</taxon>
        <taxon>Vertebrata</taxon>
        <taxon>Euteleostomi</taxon>
        <taxon>Mammalia</taxon>
        <taxon>Eutheria</taxon>
        <taxon>Euarchontoglires</taxon>
        <taxon>Primates</taxon>
        <taxon>Haplorrhini</taxon>
        <taxon>Catarrhini</taxon>
        <taxon>Cercopithecidae</taxon>
        <taxon>Cercopithecinae</taxon>
        <taxon>Macaca</taxon>
    </lineage>
</organism>
<name>ALDOC_MACFA</name>
<keyword id="KW-0007">Acetylation</keyword>
<keyword id="KW-0324">Glycolysis</keyword>
<keyword id="KW-0456">Lyase</keyword>
<keyword id="KW-0597">Phosphoprotein</keyword>
<keyword id="KW-1185">Reference proteome</keyword>
<keyword id="KW-0704">Schiff base</keyword>
<gene>
    <name type="primary">ALDOC</name>
    <name type="ORF">QccE-19239</name>
    <name type="ORF">QccE-21970</name>
</gene>
<reference key="1">
    <citation type="submission" date="2000-11" db="EMBL/GenBank/DDBJ databases">
        <title>Isolation of full-length cDNA clones from macaque brain cDNA libraries.</title>
        <authorList>
            <person name="Osada N."/>
            <person name="Hida M."/>
            <person name="Kusuda J."/>
            <person name="Tanuma R."/>
            <person name="Iseki K."/>
            <person name="Hirai M."/>
            <person name="Terao K."/>
            <person name="Suzuki Y."/>
            <person name="Sugano S."/>
            <person name="Hashimoto K."/>
        </authorList>
    </citation>
    <scope>NUCLEOTIDE SEQUENCE [LARGE SCALE MRNA]</scope>
    <source>
        <tissue>Brain cortex</tissue>
    </source>
</reference>
<reference key="2">
    <citation type="submission" date="2005-06" db="EMBL/GenBank/DDBJ databases">
        <title>DNA sequences of macaque genes expressed in brain or testis and its evolutionary implications.</title>
        <authorList>
            <consortium name="International consortium for macaque cDNA sequencing and analysis"/>
        </authorList>
    </citation>
    <scope>NUCLEOTIDE SEQUENCE [LARGE SCALE MRNA]</scope>
    <source>
        <tissue>Brain cortex</tissue>
    </source>
</reference>
<comment type="catalytic activity">
    <reaction>
        <text>beta-D-fructose 1,6-bisphosphate = D-glyceraldehyde 3-phosphate + dihydroxyacetone phosphate</text>
        <dbReference type="Rhea" id="RHEA:14729"/>
        <dbReference type="ChEBI" id="CHEBI:32966"/>
        <dbReference type="ChEBI" id="CHEBI:57642"/>
        <dbReference type="ChEBI" id="CHEBI:59776"/>
        <dbReference type="EC" id="4.1.2.13"/>
    </reaction>
</comment>
<comment type="pathway">
    <text>Carbohydrate degradation; glycolysis; D-glyceraldehyde 3-phosphate and glycerone phosphate from D-glucose: step 4/4.</text>
</comment>
<comment type="subunit">
    <text evidence="1">Homotetramer. Interacts with ATP6V1E1.</text>
</comment>
<comment type="miscellaneous">
    <text>In vertebrates, three forms of this ubiquitous glycolytic enzyme are found, aldolase A in muscle, aldolase B in liver and aldolase C in brain.</text>
</comment>
<comment type="similarity">
    <text evidence="4">Belongs to the class I fructose-bisphosphate aldolase family.</text>
</comment>
<accession>Q9GKW3</accession>
<accession>Q4R4S9</accession>
<proteinExistence type="evidence at transcript level"/>
<sequence length="364" mass="39422">MPHSYPALSAEQKKELSDIALRIVAPGKGILAADESVGSMAKRLSQIGVENTEENRRLYRQVLFSADDRVKKCIGGVIFFHETLYQKDDNGVPFVRTIQDKGIVVGIKVDKGVVPLAGTDGETTTQGLDGLSERCAQYKKDGADFAKWRCVLKISERTPSALAILENANVLARYASICQQNGIVPIVEPEILPDGDHDLKRCQYVTEKVLAAVYKALSDHHVYLEGTLLKPNMVTPGHACPIKYTPEEIAMATVTALRRTVPPAVPGVTFLSGGQSEEEASLNLNAINRCPLPRPWALTFSYGRALQASALNAWRGQRDNAGAATEEFIKRAEVNGLAAQGKYEGSGEDGGAAAQSLYIANHAY</sequence>